<accession>C6BV77</accession>
<feature type="chain" id="PRO_1000204806" description="Pyridoxine 5'-phosphate synthase">
    <location>
        <begin position="1"/>
        <end position="241"/>
    </location>
</feature>
<feature type="active site" description="Proton acceptor" evidence="1">
    <location>
        <position position="43"/>
    </location>
</feature>
<feature type="active site" description="Proton acceptor" evidence="1">
    <location>
        <position position="70"/>
    </location>
</feature>
<feature type="active site" description="Proton donor" evidence="1">
    <location>
        <position position="191"/>
    </location>
</feature>
<feature type="binding site" evidence="1">
    <location>
        <position position="7"/>
    </location>
    <ligand>
        <name>3-amino-2-oxopropyl phosphate</name>
        <dbReference type="ChEBI" id="CHEBI:57279"/>
    </ligand>
</feature>
<feature type="binding site" evidence="1">
    <location>
        <begin position="9"/>
        <end position="10"/>
    </location>
    <ligand>
        <name>1-deoxy-D-xylulose 5-phosphate</name>
        <dbReference type="ChEBI" id="CHEBI:57792"/>
    </ligand>
</feature>
<feature type="binding site" evidence="1">
    <location>
        <position position="18"/>
    </location>
    <ligand>
        <name>3-amino-2-oxopropyl phosphate</name>
        <dbReference type="ChEBI" id="CHEBI:57279"/>
    </ligand>
</feature>
<feature type="binding site" evidence="1">
    <location>
        <position position="45"/>
    </location>
    <ligand>
        <name>1-deoxy-D-xylulose 5-phosphate</name>
        <dbReference type="ChEBI" id="CHEBI:57792"/>
    </ligand>
</feature>
<feature type="binding site" evidence="1">
    <location>
        <position position="50"/>
    </location>
    <ligand>
        <name>1-deoxy-D-xylulose 5-phosphate</name>
        <dbReference type="ChEBI" id="CHEBI:57792"/>
    </ligand>
</feature>
<feature type="binding site" evidence="1">
    <location>
        <position position="100"/>
    </location>
    <ligand>
        <name>1-deoxy-D-xylulose 5-phosphate</name>
        <dbReference type="ChEBI" id="CHEBI:57792"/>
    </ligand>
</feature>
<feature type="binding site" evidence="1">
    <location>
        <position position="192"/>
    </location>
    <ligand>
        <name>3-amino-2-oxopropyl phosphate</name>
        <dbReference type="ChEBI" id="CHEBI:57279"/>
    </ligand>
</feature>
<feature type="binding site" evidence="1">
    <location>
        <begin position="213"/>
        <end position="214"/>
    </location>
    <ligand>
        <name>3-amino-2-oxopropyl phosphate</name>
        <dbReference type="ChEBI" id="CHEBI:57279"/>
    </ligand>
</feature>
<feature type="site" description="Transition state stabilizer" evidence="1">
    <location>
        <position position="151"/>
    </location>
</feature>
<gene>
    <name evidence="1" type="primary">pdxJ</name>
    <name type="ordered locus">Desal_1992</name>
</gene>
<sequence>MPFLCVNVDHVATIRQARLGIEPDPVTAAAMCELAGAVGIIMHLREDRRHVQDRDIELISKTIQTEFHFEMAATEEMQQIALRIDPATVCLVPEKREELTTEGGLNCIGQEKRLTEYLAPLHEKGIGSSLFIDADADQIKAAKAIGAEYVEIHTGHFADAPTRSEQKAELTRIIDGIKMSQDLGLKVNLGHGLNYVNILDFADVPGICEYSIGHSIMSRAIYVGIDRAVRDMVEIIRNFAD</sequence>
<protein>
    <recommendedName>
        <fullName evidence="1">Pyridoxine 5'-phosphate synthase</fullName>
        <shortName evidence="1">PNP synthase</shortName>
        <ecNumber evidence="1">2.6.99.2</ecNumber>
    </recommendedName>
</protein>
<keyword id="KW-0963">Cytoplasm</keyword>
<keyword id="KW-0664">Pyridoxine biosynthesis</keyword>
<keyword id="KW-1185">Reference proteome</keyword>
<keyword id="KW-0808">Transferase</keyword>
<evidence type="ECO:0000255" key="1">
    <source>
        <dbReference type="HAMAP-Rule" id="MF_00279"/>
    </source>
</evidence>
<dbReference type="EC" id="2.6.99.2" evidence="1"/>
<dbReference type="EMBL" id="CP001649">
    <property type="protein sequence ID" value="ACS80052.1"/>
    <property type="molecule type" value="Genomic_DNA"/>
</dbReference>
<dbReference type="RefSeq" id="WP_015851868.1">
    <property type="nucleotide sequence ID" value="NC_012881.1"/>
</dbReference>
<dbReference type="SMR" id="C6BV77"/>
<dbReference type="STRING" id="526222.Desal_1992"/>
<dbReference type="KEGG" id="dsa:Desal_1992"/>
<dbReference type="eggNOG" id="COG0854">
    <property type="taxonomic scope" value="Bacteria"/>
</dbReference>
<dbReference type="HOGENOM" id="CLU_074563_0_0_7"/>
<dbReference type="OrthoDB" id="9806590at2"/>
<dbReference type="UniPathway" id="UPA00244">
    <property type="reaction ID" value="UER00313"/>
</dbReference>
<dbReference type="Proteomes" id="UP000002601">
    <property type="component" value="Chromosome"/>
</dbReference>
<dbReference type="GO" id="GO:0005829">
    <property type="term" value="C:cytosol"/>
    <property type="evidence" value="ECO:0007669"/>
    <property type="project" value="TreeGrafter"/>
</dbReference>
<dbReference type="GO" id="GO:0033856">
    <property type="term" value="F:pyridoxine 5'-phosphate synthase activity"/>
    <property type="evidence" value="ECO:0007669"/>
    <property type="project" value="UniProtKB-EC"/>
</dbReference>
<dbReference type="GO" id="GO:0008615">
    <property type="term" value="P:pyridoxine biosynthetic process"/>
    <property type="evidence" value="ECO:0007669"/>
    <property type="project" value="UniProtKB-UniRule"/>
</dbReference>
<dbReference type="CDD" id="cd00003">
    <property type="entry name" value="PNPsynthase"/>
    <property type="match status" value="1"/>
</dbReference>
<dbReference type="Gene3D" id="3.20.20.70">
    <property type="entry name" value="Aldolase class I"/>
    <property type="match status" value="1"/>
</dbReference>
<dbReference type="HAMAP" id="MF_00279">
    <property type="entry name" value="PdxJ"/>
    <property type="match status" value="1"/>
</dbReference>
<dbReference type="InterPro" id="IPR013785">
    <property type="entry name" value="Aldolase_TIM"/>
</dbReference>
<dbReference type="InterPro" id="IPR004569">
    <property type="entry name" value="PyrdxlP_synth_PdxJ"/>
</dbReference>
<dbReference type="InterPro" id="IPR036130">
    <property type="entry name" value="Pyridoxine-5'_phos_synth"/>
</dbReference>
<dbReference type="NCBIfam" id="TIGR00559">
    <property type="entry name" value="pdxJ"/>
    <property type="match status" value="1"/>
</dbReference>
<dbReference type="NCBIfam" id="NF003625">
    <property type="entry name" value="PRK05265.1-3"/>
    <property type="match status" value="1"/>
</dbReference>
<dbReference type="NCBIfam" id="NF003627">
    <property type="entry name" value="PRK05265.1-5"/>
    <property type="match status" value="1"/>
</dbReference>
<dbReference type="PANTHER" id="PTHR30456">
    <property type="entry name" value="PYRIDOXINE 5'-PHOSPHATE SYNTHASE"/>
    <property type="match status" value="1"/>
</dbReference>
<dbReference type="PANTHER" id="PTHR30456:SF0">
    <property type="entry name" value="PYRIDOXINE 5'-PHOSPHATE SYNTHASE"/>
    <property type="match status" value="1"/>
</dbReference>
<dbReference type="Pfam" id="PF03740">
    <property type="entry name" value="PdxJ"/>
    <property type="match status" value="1"/>
</dbReference>
<dbReference type="SUPFAM" id="SSF63892">
    <property type="entry name" value="Pyridoxine 5'-phosphate synthase"/>
    <property type="match status" value="1"/>
</dbReference>
<proteinExistence type="inferred from homology"/>
<organism>
    <name type="scientific">Maridesulfovibrio salexigens (strain ATCC 14822 / DSM 2638 / NCIMB 8403 / VKM B-1763)</name>
    <name type="common">Desulfovibrio salexigens</name>
    <dbReference type="NCBI Taxonomy" id="526222"/>
    <lineage>
        <taxon>Bacteria</taxon>
        <taxon>Pseudomonadati</taxon>
        <taxon>Thermodesulfobacteriota</taxon>
        <taxon>Desulfovibrionia</taxon>
        <taxon>Desulfovibrionales</taxon>
        <taxon>Desulfovibrionaceae</taxon>
        <taxon>Maridesulfovibrio</taxon>
    </lineage>
</organism>
<comment type="function">
    <text evidence="1">Catalyzes the complicated ring closure reaction between the two acyclic compounds 1-deoxy-D-xylulose-5-phosphate (DXP) and 3-amino-2-oxopropyl phosphate (1-amino-acetone-3-phosphate or AAP) to form pyridoxine 5'-phosphate (PNP) and inorganic phosphate.</text>
</comment>
<comment type="catalytic activity">
    <reaction evidence="1">
        <text>3-amino-2-oxopropyl phosphate + 1-deoxy-D-xylulose 5-phosphate = pyridoxine 5'-phosphate + phosphate + 2 H2O + H(+)</text>
        <dbReference type="Rhea" id="RHEA:15265"/>
        <dbReference type="ChEBI" id="CHEBI:15377"/>
        <dbReference type="ChEBI" id="CHEBI:15378"/>
        <dbReference type="ChEBI" id="CHEBI:43474"/>
        <dbReference type="ChEBI" id="CHEBI:57279"/>
        <dbReference type="ChEBI" id="CHEBI:57792"/>
        <dbReference type="ChEBI" id="CHEBI:58589"/>
        <dbReference type="EC" id="2.6.99.2"/>
    </reaction>
</comment>
<comment type="pathway">
    <text evidence="1">Cofactor biosynthesis; pyridoxine 5'-phosphate biosynthesis; pyridoxine 5'-phosphate from D-erythrose 4-phosphate: step 5/5.</text>
</comment>
<comment type="subunit">
    <text evidence="1">Homooctamer; tetramer of dimers.</text>
</comment>
<comment type="subcellular location">
    <subcellularLocation>
        <location evidence="1">Cytoplasm</location>
    </subcellularLocation>
</comment>
<comment type="similarity">
    <text evidence="1">Belongs to the PNP synthase family.</text>
</comment>
<reference key="1">
    <citation type="submission" date="2009-06" db="EMBL/GenBank/DDBJ databases">
        <title>Complete sequence of Desulfovibrio salexigens DSM 2638.</title>
        <authorList>
            <consortium name="US DOE Joint Genome Institute"/>
            <person name="Lucas S."/>
            <person name="Copeland A."/>
            <person name="Lapidus A."/>
            <person name="Glavina del Rio T."/>
            <person name="Tice H."/>
            <person name="Bruce D."/>
            <person name="Goodwin L."/>
            <person name="Pitluck S."/>
            <person name="Munk A.C."/>
            <person name="Brettin T."/>
            <person name="Detter J.C."/>
            <person name="Han C."/>
            <person name="Tapia R."/>
            <person name="Larimer F."/>
            <person name="Land M."/>
            <person name="Hauser L."/>
            <person name="Kyrpides N."/>
            <person name="Anderson I."/>
            <person name="Wall J.D."/>
            <person name="Arkin A.P."/>
            <person name="Dehal P."/>
            <person name="Chivian D."/>
            <person name="Giles B."/>
            <person name="Hazen T.C."/>
        </authorList>
    </citation>
    <scope>NUCLEOTIDE SEQUENCE [LARGE SCALE GENOMIC DNA]</scope>
    <source>
        <strain>ATCC 14822 / DSM 2638 / NCIMB 8403 / VKM B-1763</strain>
    </source>
</reference>
<name>PDXJ_MARSD</name>